<accession>P0AFL5</accession>
<accession>P20752</accession>
<dbReference type="EC" id="5.2.1.8"/>
<dbReference type="EMBL" id="AE005174">
    <property type="protein sequence ID" value="AAG58471.1"/>
    <property type="molecule type" value="Genomic_DNA"/>
</dbReference>
<dbReference type="EMBL" id="BA000007">
    <property type="protein sequence ID" value="BAB37637.1"/>
    <property type="molecule type" value="Genomic_DNA"/>
</dbReference>
<dbReference type="PIR" id="C86001">
    <property type="entry name" value="C86001"/>
</dbReference>
<dbReference type="PIR" id="F91155">
    <property type="entry name" value="F91155"/>
</dbReference>
<dbReference type="RefSeq" id="NP_312241.1">
    <property type="nucleotide sequence ID" value="NC_002695.1"/>
</dbReference>
<dbReference type="RefSeq" id="WP_000477225.1">
    <property type="nucleotide sequence ID" value="NZ_VOAI01000004.1"/>
</dbReference>
<dbReference type="BMRB" id="P0AFL5"/>
<dbReference type="SMR" id="P0AFL5"/>
<dbReference type="STRING" id="155864.Z4724"/>
<dbReference type="GeneID" id="915930"/>
<dbReference type="GeneID" id="93778634"/>
<dbReference type="KEGG" id="ece:Z4724"/>
<dbReference type="KEGG" id="ecs:ECs_4214"/>
<dbReference type="PATRIC" id="fig|386585.9.peg.4398"/>
<dbReference type="eggNOG" id="COG0652">
    <property type="taxonomic scope" value="Bacteria"/>
</dbReference>
<dbReference type="HOGENOM" id="CLU_012062_16_9_6"/>
<dbReference type="OMA" id="SVWGQVI"/>
<dbReference type="Proteomes" id="UP000000558">
    <property type="component" value="Chromosome"/>
</dbReference>
<dbReference type="Proteomes" id="UP000002519">
    <property type="component" value="Chromosome"/>
</dbReference>
<dbReference type="GO" id="GO:0042597">
    <property type="term" value="C:periplasmic space"/>
    <property type="evidence" value="ECO:0007669"/>
    <property type="project" value="UniProtKB-SubCell"/>
</dbReference>
<dbReference type="GO" id="GO:0003755">
    <property type="term" value="F:peptidyl-prolyl cis-trans isomerase activity"/>
    <property type="evidence" value="ECO:0007669"/>
    <property type="project" value="UniProtKB-KW"/>
</dbReference>
<dbReference type="GO" id="GO:0006457">
    <property type="term" value="P:protein folding"/>
    <property type="evidence" value="ECO:0007669"/>
    <property type="project" value="InterPro"/>
</dbReference>
<dbReference type="CDD" id="cd01920">
    <property type="entry name" value="cyclophilin_EcCYP_like"/>
    <property type="match status" value="1"/>
</dbReference>
<dbReference type="FunFam" id="2.40.100.10:FF:000006">
    <property type="entry name" value="Peptidyl-prolyl cis-trans isomerase"/>
    <property type="match status" value="1"/>
</dbReference>
<dbReference type="Gene3D" id="2.40.100.10">
    <property type="entry name" value="Cyclophilin-like"/>
    <property type="match status" value="1"/>
</dbReference>
<dbReference type="InterPro" id="IPR029000">
    <property type="entry name" value="Cyclophilin-like_dom_sf"/>
</dbReference>
<dbReference type="InterPro" id="IPR020892">
    <property type="entry name" value="Cyclophilin-type_PPIase_CS"/>
</dbReference>
<dbReference type="InterPro" id="IPR002130">
    <property type="entry name" value="Cyclophilin-type_PPIase_dom"/>
</dbReference>
<dbReference type="InterPro" id="IPR044665">
    <property type="entry name" value="E_coli_cyclophilin_A-like"/>
</dbReference>
<dbReference type="NCBIfam" id="NF008151">
    <property type="entry name" value="PRK10903.1"/>
    <property type="match status" value="1"/>
</dbReference>
<dbReference type="PANTHER" id="PTHR43246">
    <property type="entry name" value="PEPTIDYL-PROLYL CIS-TRANS ISOMERASE CYP38, CHLOROPLASTIC"/>
    <property type="match status" value="1"/>
</dbReference>
<dbReference type="Pfam" id="PF00160">
    <property type="entry name" value="Pro_isomerase"/>
    <property type="match status" value="1"/>
</dbReference>
<dbReference type="PRINTS" id="PR00153">
    <property type="entry name" value="CSAPPISMRASE"/>
</dbReference>
<dbReference type="SUPFAM" id="SSF50891">
    <property type="entry name" value="Cyclophilin-like"/>
    <property type="match status" value="1"/>
</dbReference>
<dbReference type="PROSITE" id="PS00170">
    <property type="entry name" value="CSA_PPIASE_1"/>
    <property type="match status" value="1"/>
</dbReference>
<dbReference type="PROSITE" id="PS50072">
    <property type="entry name" value="CSA_PPIASE_2"/>
    <property type="match status" value="1"/>
</dbReference>
<comment type="function">
    <text evidence="1">PPIases accelerate the folding of proteins. It catalyzes the cis-trans isomerization of proline imidic peptide bonds in oligopeptides (By similarity).</text>
</comment>
<comment type="catalytic activity">
    <reaction>
        <text>[protein]-peptidylproline (omega=180) = [protein]-peptidylproline (omega=0)</text>
        <dbReference type="Rhea" id="RHEA:16237"/>
        <dbReference type="Rhea" id="RHEA-COMP:10747"/>
        <dbReference type="Rhea" id="RHEA-COMP:10748"/>
        <dbReference type="ChEBI" id="CHEBI:83833"/>
        <dbReference type="ChEBI" id="CHEBI:83834"/>
        <dbReference type="EC" id="5.2.1.8"/>
    </reaction>
</comment>
<comment type="subcellular location">
    <subcellularLocation>
        <location evidence="1">Periplasm</location>
    </subcellularLocation>
</comment>
<comment type="similarity">
    <text evidence="3">Belongs to the cyclophilin-type PPIase family.</text>
</comment>
<sequence length="190" mass="20431">MFKSTLAAMAAVFALSALSPAAMAAKGDPHVLLTTSAGNIELELDKQKAPVSVQNFVDYVNSGFYNNTTFHRVIPGFMIQGGGFTEQMQQKKPNPPIKNEADNGLRNTRGTIAMARTADKDSATSQFFINVADNAFLDHGQRDFGYAVFGKVVKGMDVADKISQVPTHDVGPYQNVPSKPVVILSAKVLP</sequence>
<reference key="1">
    <citation type="journal article" date="2001" name="Nature">
        <title>Genome sequence of enterohaemorrhagic Escherichia coli O157:H7.</title>
        <authorList>
            <person name="Perna N.T."/>
            <person name="Plunkett G. III"/>
            <person name="Burland V."/>
            <person name="Mau B."/>
            <person name="Glasner J.D."/>
            <person name="Rose D.J."/>
            <person name="Mayhew G.F."/>
            <person name="Evans P.S."/>
            <person name="Gregor J."/>
            <person name="Kirkpatrick H.A."/>
            <person name="Posfai G."/>
            <person name="Hackett J."/>
            <person name="Klink S."/>
            <person name="Boutin A."/>
            <person name="Shao Y."/>
            <person name="Miller L."/>
            <person name="Grotbeck E.J."/>
            <person name="Davis N.W."/>
            <person name="Lim A."/>
            <person name="Dimalanta E.T."/>
            <person name="Potamousis K."/>
            <person name="Apodaca J."/>
            <person name="Anantharaman T.S."/>
            <person name="Lin J."/>
            <person name="Yen G."/>
            <person name="Schwartz D.C."/>
            <person name="Welch R.A."/>
            <person name="Blattner F.R."/>
        </authorList>
    </citation>
    <scope>NUCLEOTIDE SEQUENCE [LARGE SCALE GENOMIC DNA]</scope>
    <source>
        <strain>O157:H7 / EDL933 / ATCC 700927 / EHEC</strain>
    </source>
</reference>
<reference key="2">
    <citation type="journal article" date="2001" name="DNA Res.">
        <title>Complete genome sequence of enterohemorrhagic Escherichia coli O157:H7 and genomic comparison with a laboratory strain K-12.</title>
        <authorList>
            <person name="Hayashi T."/>
            <person name="Makino K."/>
            <person name="Ohnishi M."/>
            <person name="Kurokawa K."/>
            <person name="Ishii K."/>
            <person name="Yokoyama K."/>
            <person name="Han C.-G."/>
            <person name="Ohtsubo E."/>
            <person name="Nakayama K."/>
            <person name="Murata T."/>
            <person name="Tanaka M."/>
            <person name="Tobe T."/>
            <person name="Iida T."/>
            <person name="Takami H."/>
            <person name="Honda T."/>
            <person name="Sasakawa C."/>
            <person name="Ogasawara N."/>
            <person name="Yasunaga T."/>
            <person name="Kuhara S."/>
            <person name="Shiba T."/>
            <person name="Hattori M."/>
            <person name="Shinagawa H."/>
        </authorList>
    </citation>
    <scope>NUCLEOTIDE SEQUENCE [LARGE SCALE GENOMIC DNA]</scope>
    <source>
        <strain>O157:H7 / Sakai / RIMD 0509952 / EHEC</strain>
    </source>
</reference>
<gene>
    <name type="primary">ppiA</name>
    <name type="ordered locus">Z4724</name>
    <name type="ordered locus">ECs4214</name>
</gene>
<keyword id="KW-0413">Isomerase</keyword>
<keyword id="KW-0574">Periplasm</keyword>
<keyword id="KW-1185">Reference proteome</keyword>
<keyword id="KW-0697">Rotamase</keyword>
<keyword id="KW-0732">Signal</keyword>
<evidence type="ECO:0000250" key="1"/>
<evidence type="ECO:0000255" key="2">
    <source>
        <dbReference type="PROSITE-ProRule" id="PRU00156"/>
    </source>
</evidence>
<evidence type="ECO:0000305" key="3"/>
<feature type="signal peptide" evidence="1">
    <location>
        <begin position="1"/>
        <end position="24"/>
    </location>
</feature>
<feature type="chain" id="PRO_0000045120" description="Peptidyl-prolyl cis-trans isomerase A">
    <location>
        <begin position="25"/>
        <end position="190"/>
    </location>
</feature>
<feature type="domain" description="PPIase cyclophilin-type" evidence="2">
    <location>
        <begin position="27"/>
        <end position="188"/>
    </location>
</feature>
<proteinExistence type="inferred from homology"/>
<organism>
    <name type="scientific">Escherichia coli O157:H7</name>
    <dbReference type="NCBI Taxonomy" id="83334"/>
    <lineage>
        <taxon>Bacteria</taxon>
        <taxon>Pseudomonadati</taxon>
        <taxon>Pseudomonadota</taxon>
        <taxon>Gammaproteobacteria</taxon>
        <taxon>Enterobacterales</taxon>
        <taxon>Enterobacteriaceae</taxon>
        <taxon>Escherichia</taxon>
    </lineage>
</organism>
<name>PPIA_ECO57</name>
<protein>
    <recommendedName>
        <fullName>Peptidyl-prolyl cis-trans isomerase A</fullName>
        <shortName>PPIase A</shortName>
        <ecNumber>5.2.1.8</ecNumber>
    </recommendedName>
    <alternativeName>
        <fullName>Cyclophilin A</fullName>
    </alternativeName>
    <alternativeName>
        <fullName>Rotamase A</fullName>
    </alternativeName>
</protein>